<accession>F4I1G5</accession>
<accession>F4I1G6</accession>
<accession>Q8L813</accession>
<accession>Q8RXM0</accession>
<keyword id="KW-0025">Alternative splicing</keyword>
<keyword id="KW-0150">Chloroplast</keyword>
<keyword id="KW-0472">Membrane</keyword>
<keyword id="KW-0934">Plastid</keyword>
<keyword id="KW-1001">Plastid inner membrane</keyword>
<keyword id="KW-1185">Reference proteome</keyword>
<keyword id="KW-0809">Transit peptide</keyword>
<keyword id="KW-0812">Transmembrane</keyword>
<keyword id="KW-1133">Transmembrane helix</keyword>
<evidence type="ECO:0000255" key="1"/>
<evidence type="ECO:0000269" key="2">
    <source>
    </source>
</evidence>
<evidence type="ECO:0000269" key="3">
    <source>
    </source>
</evidence>
<evidence type="ECO:0000305" key="4"/>
<evidence type="ECO:0000305" key="5">
    <source>
    </source>
</evidence>
<organism>
    <name type="scientific">Arabidopsis thaliana</name>
    <name type="common">Mouse-ear cress</name>
    <dbReference type="NCBI Taxonomy" id="3702"/>
    <lineage>
        <taxon>Eukaryota</taxon>
        <taxon>Viridiplantae</taxon>
        <taxon>Streptophyta</taxon>
        <taxon>Embryophyta</taxon>
        <taxon>Tracheophyta</taxon>
        <taxon>Spermatophyta</taxon>
        <taxon>Magnoliopsida</taxon>
        <taxon>eudicotyledons</taxon>
        <taxon>Gunneridae</taxon>
        <taxon>Pentapetalae</taxon>
        <taxon>rosids</taxon>
        <taxon>malvids</taxon>
        <taxon>Brassicales</taxon>
        <taxon>Brassicaceae</taxon>
        <taxon>Camelineae</taxon>
        <taxon>Arabidopsis</taxon>
    </lineage>
</organism>
<comment type="subcellular location">
    <subcellularLocation>
        <location evidence="2 3">Plastid</location>
        <location evidence="2 3">Chloroplast inner membrane</location>
        <topology evidence="2 3">Multi-pass membrane protein</topology>
    </subcellularLocation>
</comment>
<comment type="alternative products">
    <event type="alternative splicing"/>
    <isoform>
        <id>F4I1G5-1</id>
        <name>1</name>
        <sequence type="displayed"/>
    </isoform>
    <isoform>
        <id>F4I1G5-2</id>
        <name>2</name>
        <sequence type="described" ref="VSP_044490"/>
    </isoform>
</comment>
<comment type="induction">
    <text evidence="3">Accumulates at low levels in response to cold treatment.</text>
</comment>
<comment type="similarity">
    <text evidence="4">Belongs to the Cold-regulated 413 protein family.</text>
</comment>
<dbReference type="EMBL" id="AC068667">
    <property type="status" value="NOT_ANNOTATED_CDS"/>
    <property type="molecule type" value="Genomic_DNA"/>
</dbReference>
<dbReference type="EMBL" id="CP002684">
    <property type="protein sequence ID" value="AEE31079.1"/>
    <property type="molecule type" value="Genomic_DNA"/>
</dbReference>
<dbReference type="EMBL" id="CP002684">
    <property type="protein sequence ID" value="AEE31080.1"/>
    <property type="molecule type" value="Genomic_DNA"/>
</dbReference>
<dbReference type="EMBL" id="AY080813">
    <property type="protein sequence ID" value="AAL87293.1"/>
    <property type="molecule type" value="mRNA"/>
</dbReference>
<dbReference type="EMBL" id="AY123008">
    <property type="protein sequence ID" value="AAM67541.1"/>
    <property type="molecule type" value="mRNA"/>
</dbReference>
<dbReference type="RefSeq" id="NP_564327.1">
    <molecule id="F4I1G5-1"/>
    <property type="nucleotide sequence ID" value="NM_102678.3"/>
</dbReference>
<dbReference type="RefSeq" id="NP_973936.1">
    <molecule id="F4I1G5-2"/>
    <property type="nucleotide sequence ID" value="NM_202207.1"/>
</dbReference>
<dbReference type="BioGRID" id="25049">
    <property type="interactions" value="12"/>
</dbReference>
<dbReference type="FunCoup" id="F4I1G5">
    <property type="interactions" value="738"/>
</dbReference>
<dbReference type="IntAct" id="F4I1G5">
    <property type="interactions" value="12"/>
</dbReference>
<dbReference type="STRING" id="3702.F4I1G5"/>
<dbReference type="iPTMnet" id="F4I1G5"/>
<dbReference type="PaxDb" id="3702-AT1G29390.1"/>
<dbReference type="EnsemblPlants" id="AT1G29390.1">
    <molecule id="F4I1G5-1"/>
    <property type="protein sequence ID" value="AT1G29390.1"/>
    <property type="gene ID" value="AT1G29390"/>
</dbReference>
<dbReference type="EnsemblPlants" id="AT1G29390.2">
    <molecule id="F4I1G5-2"/>
    <property type="protein sequence ID" value="AT1G29390.2"/>
    <property type="gene ID" value="AT1G29390"/>
</dbReference>
<dbReference type="GeneID" id="839814"/>
<dbReference type="Gramene" id="AT1G29390.1">
    <molecule id="F4I1G5-1"/>
    <property type="protein sequence ID" value="AT1G29390.1"/>
    <property type="gene ID" value="AT1G29390"/>
</dbReference>
<dbReference type="Gramene" id="AT1G29390.2">
    <molecule id="F4I1G5-2"/>
    <property type="protein sequence ID" value="AT1G29390.2"/>
    <property type="gene ID" value="AT1G29390"/>
</dbReference>
<dbReference type="KEGG" id="ath:AT1G29390"/>
<dbReference type="Araport" id="AT1G29390"/>
<dbReference type="TAIR" id="AT1G29390">
    <property type="gene designation" value="COR314-TM2"/>
</dbReference>
<dbReference type="eggNOG" id="ENOG502RXZY">
    <property type="taxonomic scope" value="Eukaryota"/>
</dbReference>
<dbReference type="InParanoid" id="F4I1G5"/>
<dbReference type="OMA" id="PRNLQWV"/>
<dbReference type="OrthoDB" id="1928310at2759"/>
<dbReference type="PRO" id="PR:F4I1G5"/>
<dbReference type="Proteomes" id="UP000006548">
    <property type="component" value="Chromosome 1"/>
</dbReference>
<dbReference type="ExpressionAtlas" id="F4I1G5">
    <property type="expression patterns" value="baseline and differential"/>
</dbReference>
<dbReference type="GO" id="GO:0009941">
    <property type="term" value="C:chloroplast envelope"/>
    <property type="evidence" value="ECO:0000314"/>
    <property type="project" value="TAIR"/>
</dbReference>
<dbReference type="GO" id="GO:0009706">
    <property type="term" value="C:chloroplast inner membrane"/>
    <property type="evidence" value="ECO:0007669"/>
    <property type="project" value="UniProtKB-SubCell"/>
</dbReference>
<dbReference type="GO" id="GO:0009535">
    <property type="term" value="C:chloroplast thylakoid membrane"/>
    <property type="evidence" value="ECO:0000314"/>
    <property type="project" value="TAIR"/>
</dbReference>
<dbReference type="GO" id="GO:0070417">
    <property type="term" value="P:cellular response to cold"/>
    <property type="evidence" value="ECO:0000270"/>
    <property type="project" value="TAIR"/>
</dbReference>
<dbReference type="GO" id="GO:0009631">
    <property type="term" value="P:cold acclimation"/>
    <property type="evidence" value="ECO:0000315"/>
    <property type="project" value="TAIR"/>
</dbReference>
<dbReference type="InterPro" id="IPR008892">
    <property type="entry name" value="COR413"/>
</dbReference>
<dbReference type="PANTHER" id="PTHR33596:SF17">
    <property type="entry name" value="COLD-REGULATED 413 INNER MEMBRANE PROTEIN 1, CHLOROPLASTIC-RELATED"/>
    <property type="match status" value="1"/>
</dbReference>
<dbReference type="PANTHER" id="PTHR33596">
    <property type="entry name" value="COLD-REGULATED 413 PLASMA MEMBRANE PROTEIN 2"/>
    <property type="match status" value="1"/>
</dbReference>
<dbReference type="Pfam" id="PF05562">
    <property type="entry name" value="WCOR413"/>
    <property type="match status" value="1"/>
</dbReference>
<sequence length="226" mass="24798">MASLCLSSSRIVSLHHQKPFLALKLRPRPSNISGLGHSTSVVCFNPLRLSADRQRTATVSARAEKRRKRGSSVVCYATPMLSVHNLQWISTISCVALMFARGTGIHKSFVVPLFALQAPMGIVSWMKGEYGIWAAFLALLTRLFFSFPVELELPFIALLLVIVAPYQVMSIRGKQEGAILSLAISCFLAFQHFSRAGTLQKAFDQNSVLATVAIIGVTVVSFLFLI</sequence>
<proteinExistence type="evidence at protein level"/>
<protein>
    <recommendedName>
        <fullName>Cold-regulated 413 inner membrane protein 2, chloroplastic</fullName>
        <shortName>AtCOR413-IM2</shortName>
    </recommendedName>
    <alternativeName>
        <fullName>Cold-regulated 413 thylakoid membrane 2</fullName>
        <shortName>AtCOR413-TM2</shortName>
    </alternativeName>
</protein>
<gene>
    <name type="primary">COR413IM2</name>
    <name type="synonym">COR314TM2</name>
    <name type="synonym">COR413TM2</name>
    <name type="ordered locus">At1g29390</name>
    <name type="ORF">F15D2.42</name>
</gene>
<reference key="1">
    <citation type="journal article" date="2000" name="Nature">
        <title>Sequence and analysis of chromosome 1 of the plant Arabidopsis thaliana.</title>
        <authorList>
            <person name="Theologis A."/>
            <person name="Ecker J.R."/>
            <person name="Palm C.J."/>
            <person name="Federspiel N.A."/>
            <person name="Kaul S."/>
            <person name="White O."/>
            <person name="Alonso J."/>
            <person name="Altafi H."/>
            <person name="Araujo R."/>
            <person name="Bowman C.L."/>
            <person name="Brooks S.Y."/>
            <person name="Buehler E."/>
            <person name="Chan A."/>
            <person name="Chao Q."/>
            <person name="Chen H."/>
            <person name="Cheuk R.F."/>
            <person name="Chin C.W."/>
            <person name="Chung M.K."/>
            <person name="Conn L."/>
            <person name="Conway A.B."/>
            <person name="Conway A.R."/>
            <person name="Creasy T.H."/>
            <person name="Dewar K."/>
            <person name="Dunn P."/>
            <person name="Etgu P."/>
            <person name="Feldblyum T.V."/>
            <person name="Feng J.-D."/>
            <person name="Fong B."/>
            <person name="Fujii C.Y."/>
            <person name="Gill J.E."/>
            <person name="Goldsmith A.D."/>
            <person name="Haas B."/>
            <person name="Hansen N.F."/>
            <person name="Hughes B."/>
            <person name="Huizar L."/>
            <person name="Hunter J.L."/>
            <person name="Jenkins J."/>
            <person name="Johnson-Hopson C."/>
            <person name="Khan S."/>
            <person name="Khaykin E."/>
            <person name="Kim C.J."/>
            <person name="Koo H.L."/>
            <person name="Kremenetskaia I."/>
            <person name="Kurtz D.B."/>
            <person name="Kwan A."/>
            <person name="Lam B."/>
            <person name="Langin-Hooper S."/>
            <person name="Lee A."/>
            <person name="Lee J.M."/>
            <person name="Lenz C.A."/>
            <person name="Li J.H."/>
            <person name="Li Y.-P."/>
            <person name="Lin X."/>
            <person name="Liu S.X."/>
            <person name="Liu Z.A."/>
            <person name="Luros J.S."/>
            <person name="Maiti R."/>
            <person name="Marziali A."/>
            <person name="Militscher J."/>
            <person name="Miranda M."/>
            <person name="Nguyen M."/>
            <person name="Nierman W.C."/>
            <person name="Osborne B.I."/>
            <person name="Pai G."/>
            <person name="Peterson J."/>
            <person name="Pham P.K."/>
            <person name="Rizzo M."/>
            <person name="Rooney T."/>
            <person name="Rowley D."/>
            <person name="Sakano H."/>
            <person name="Salzberg S.L."/>
            <person name="Schwartz J.R."/>
            <person name="Shinn P."/>
            <person name="Southwick A.M."/>
            <person name="Sun H."/>
            <person name="Tallon L.J."/>
            <person name="Tambunga G."/>
            <person name="Toriumi M.J."/>
            <person name="Town C.D."/>
            <person name="Utterback T."/>
            <person name="Van Aken S."/>
            <person name="Vaysberg M."/>
            <person name="Vysotskaia V.S."/>
            <person name="Walker M."/>
            <person name="Wu D."/>
            <person name="Yu G."/>
            <person name="Fraser C.M."/>
            <person name="Venter J.C."/>
            <person name="Davis R.W."/>
        </authorList>
    </citation>
    <scope>NUCLEOTIDE SEQUENCE [LARGE SCALE GENOMIC DNA]</scope>
    <source>
        <strain>cv. Columbia</strain>
    </source>
</reference>
<reference key="2">
    <citation type="journal article" date="2017" name="Plant J.">
        <title>Araport11: a complete reannotation of the Arabidopsis thaliana reference genome.</title>
        <authorList>
            <person name="Cheng C.Y."/>
            <person name="Krishnakumar V."/>
            <person name="Chan A.P."/>
            <person name="Thibaud-Nissen F."/>
            <person name="Schobel S."/>
            <person name="Town C.D."/>
        </authorList>
    </citation>
    <scope>GENOME REANNOTATION</scope>
    <source>
        <strain>cv. Columbia</strain>
    </source>
</reference>
<reference key="3">
    <citation type="journal article" date="2003" name="Science">
        <title>Empirical analysis of transcriptional activity in the Arabidopsis genome.</title>
        <authorList>
            <person name="Yamada K."/>
            <person name="Lim J."/>
            <person name="Dale J.M."/>
            <person name="Chen H."/>
            <person name="Shinn P."/>
            <person name="Palm C.J."/>
            <person name="Southwick A.M."/>
            <person name="Wu H.C."/>
            <person name="Kim C.J."/>
            <person name="Nguyen M."/>
            <person name="Pham P.K."/>
            <person name="Cheuk R.F."/>
            <person name="Karlin-Newmann G."/>
            <person name="Liu S.X."/>
            <person name="Lam B."/>
            <person name="Sakano H."/>
            <person name="Wu T."/>
            <person name="Yu G."/>
            <person name="Miranda M."/>
            <person name="Quach H.L."/>
            <person name="Tripp M."/>
            <person name="Chang C.H."/>
            <person name="Lee J.M."/>
            <person name="Toriumi M.J."/>
            <person name="Chan M.M."/>
            <person name="Tang C.C."/>
            <person name="Onodera C.S."/>
            <person name="Deng J.M."/>
            <person name="Akiyama K."/>
            <person name="Ansari Y."/>
            <person name="Arakawa T."/>
            <person name="Banh J."/>
            <person name="Banno F."/>
            <person name="Bowser L."/>
            <person name="Brooks S.Y."/>
            <person name="Carninci P."/>
            <person name="Chao Q."/>
            <person name="Choy N."/>
            <person name="Enju A."/>
            <person name="Goldsmith A.D."/>
            <person name="Gurjal M."/>
            <person name="Hansen N.F."/>
            <person name="Hayashizaki Y."/>
            <person name="Johnson-Hopson C."/>
            <person name="Hsuan V.W."/>
            <person name="Iida K."/>
            <person name="Karnes M."/>
            <person name="Khan S."/>
            <person name="Koesema E."/>
            <person name="Ishida J."/>
            <person name="Jiang P.X."/>
            <person name="Jones T."/>
            <person name="Kawai J."/>
            <person name="Kamiya A."/>
            <person name="Meyers C."/>
            <person name="Nakajima M."/>
            <person name="Narusaka M."/>
            <person name="Seki M."/>
            <person name="Sakurai T."/>
            <person name="Satou M."/>
            <person name="Tamse R."/>
            <person name="Vaysberg M."/>
            <person name="Wallender E.K."/>
            <person name="Wong C."/>
            <person name="Yamamura Y."/>
            <person name="Yuan S."/>
            <person name="Shinozaki K."/>
            <person name="Davis R.W."/>
            <person name="Theologis A."/>
            <person name="Ecker J.R."/>
        </authorList>
    </citation>
    <scope>NUCLEOTIDE SEQUENCE [LARGE SCALE MRNA] OF 8-226 (ISOFORM 1)</scope>
    <source>
        <strain>cv. Columbia</strain>
    </source>
</reference>
<reference key="4">
    <citation type="journal article" date="2003" name="Plant Physiol.">
        <title>Expression profiling and bioinformatic analyses of a novel stress-regulated multispanning transmembrane protein family from cereals and Arabidopsis.</title>
        <authorList>
            <person name="Breton G."/>
            <person name="Danyluk J."/>
            <person name="Charron J.-B.F."/>
            <person name="Sarhan F."/>
        </authorList>
    </citation>
    <scope>GENE FAMILY</scope>
    <scope>NOMENCLATURE</scope>
</reference>
<reference key="5">
    <citation type="journal article" date="2008" name="Plant Cell Environ.">
        <title>Identification and characterization of Cor413im proteins as novel components of the chloroplast inner envelope.</title>
        <authorList>
            <person name="Okawa K."/>
            <person name="Nakayama K."/>
            <person name="Kakizaki T."/>
            <person name="Yamashita T."/>
            <person name="Inaba T."/>
        </authorList>
    </citation>
    <scope>TRANSIT PEPTIDE CLEAVAGE SITE</scope>
    <scope>SUBCELLULAR LOCATION</scope>
    <scope>TOPOLOGY</scope>
    <scope>INDUCTION BY COLD</scope>
</reference>
<reference key="6">
    <citation type="journal article" date="2008" name="PLoS ONE">
        <title>Sorting signals, N-terminal modifications and abundance of the chloroplast proteome.</title>
        <authorList>
            <person name="Zybailov B."/>
            <person name="Rutschow H."/>
            <person name="Friso G."/>
            <person name="Rudella A."/>
            <person name="Emanuelsson O."/>
            <person name="Sun Q."/>
            <person name="van Wijk K.J."/>
        </authorList>
    </citation>
    <scope>IDENTIFICATION BY MASS SPECTROMETRY</scope>
    <scope>SUBCELLULAR LOCATION [LARGE SCALE ANALYSIS]</scope>
</reference>
<feature type="transit peptide" description="Chloroplast" evidence="5">
    <location>
        <begin position="1"/>
        <end position="76"/>
    </location>
</feature>
<feature type="chain" id="PRO_0000420445" description="Cold-regulated 413 inner membrane protein 2, chloroplastic">
    <location>
        <begin position="77"/>
        <end position="226"/>
    </location>
</feature>
<feature type="topological domain" description="Stromal" evidence="1">
    <location>
        <begin position="77"/>
        <end position="79"/>
    </location>
</feature>
<feature type="transmembrane region" description="Helical" evidence="1">
    <location>
        <begin position="80"/>
        <end position="100"/>
    </location>
</feature>
<feature type="topological domain" description="Chloroplast intermembrane" evidence="1">
    <location>
        <begin position="101"/>
        <end position="103"/>
    </location>
</feature>
<feature type="transmembrane region" description="Helical" evidence="1">
    <location>
        <begin position="104"/>
        <end position="124"/>
    </location>
</feature>
<feature type="topological domain" description="Stromal" evidence="1">
    <location>
        <begin position="125"/>
        <end position="129"/>
    </location>
</feature>
<feature type="transmembrane region" description="Helical" evidence="1">
    <location>
        <begin position="130"/>
        <end position="150"/>
    </location>
</feature>
<feature type="topological domain" description="Chloroplast intermembrane" evidence="1">
    <location>
        <begin position="151"/>
        <end position="152"/>
    </location>
</feature>
<feature type="transmembrane region" description="Helical" evidence="1">
    <location>
        <begin position="153"/>
        <end position="173"/>
    </location>
</feature>
<feature type="topological domain" description="Stromal" evidence="1">
    <location>
        <begin position="174"/>
        <end position="176"/>
    </location>
</feature>
<feature type="transmembrane region" description="Helical" evidence="1">
    <location>
        <begin position="177"/>
        <end position="197"/>
    </location>
</feature>
<feature type="topological domain" description="Chloroplast intermembrane" evidence="1">
    <location>
        <begin position="198"/>
        <end position="205"/>
    </location>
</feature>
<feature type="transmembrane region" description="Helical" evidence="1">
    <location>
        <begin position="206"/>
        <end position="226"/>
    </location>
</feature>
<feature type="splice variant" id="VSP_044490" description="In isoform 2." evidence="4">
    <original>MASLCLSSSRIVSLHHQKPFLALKLRPRPSNISGLGHSTSVVCFNPL</original>
    <variation>MLVG</variation>
    <location>
        <begin position="1"/>
        <end position="47"/>
    </location>
</feature>
<name>CRIM2_ARATH</name>